<accession>B0TLI4</accession>
<evidence type="ECO:0000255" key="1">
    <source>
        <dbReference type="HAMAP-Rule" id="MF_00159"/>
    </source>
</evidence>
<dbReference type="EC" id="1.17.7.3" evidence="1"/>
<dbReference type="EMBL" id="CP000931">
    <property type="protein sequence ID" value="ABZ75934.1"/>
    <property type="molecule type" value="Genomic_DNA"/>
</dbReference>
<dbReference type="RefSeq" id="WP_012276474.1">
    <property type="nucleotide sequence ID" value="NC_010334.1"/>
</dbReference>
<dbReference type="SMR" id="B0TLI4"/>
<dbReference type="STRING" id="458817.Shal_1367"/>
<dbReference type="KEGG" id="shl:Shal_1367"/>
<dbReference type="eggNOG" id="COG0821">
    <property type="taxonomic scope" value="Bacteria"/>
</dbReference>
<dbReference type="HOGENOM" id="CLU_042258_0_0_6"/>
<dbReference type="OrthoDB" id="9803214at2"/>
<dbReference type="UniPathway" id="UPA00056">
    <property type="reaction ID" value="UER00096"/>
</dbReference>
<dbReference type="Proteomes" id="UP000001317">
    <property type="component" value="Chromosome"/>
</dbReference>
<dbReference type="GO" id="GO:0051539">
    <property type="term" value="F:4 iron, 4 sulfur cluster binding"/>
    <property type="evidence" value="ECO:0007669"/>
    <property type="project" value="UniProtKB-UniRule"/>
</dbReference>
<dbReference type="GO" id="GO:0046429">
    <property type="term" value="F:4-hydroxy-3-methylbut-2-en-1-yl diphosphate synthase activity (ferredoxin)"/>
    <property type="evidence" value="ECO:0007669"/>
    <property type="project" value="UniProtKB-UniRule"/>
</dbReference>
<dbReference type="GO" id="GO:0141197">
    <property type="term" value="F:4-hydroxy-3-methylbut-2-enyl-diphosphate synthase activity (flavodoxin)"/>
    <property type="evidence" value="ECO:0007669"/>
    <property type="project" value="UniProtKB-EC"/>
</dbReference>
<dbReference type="GO" id="GO:0005506">
    <property type="term" value="F:iron ion binding"/>
    <property type="evidence" value="ECO:0007669"/>
    <property type="project" value="InterPro"/>
</dbReference>
<dbReference type="GO" id="GO:0019288">
    <property type="term" value="P:isopentenyl diphosphate biosynthetic process, methylerythritol 4-phosphate pathway"/>
    <property type="evidence" value="ECO:0007669"/>
    <property type="project" value="UniProtKB-UniRule"/>
</dbReference>
<dbReference type="GO" id="GO:0016114">
    <property type="term" value="P:terpenoid biosynthetic process"/>
    <property type="evidence" value="ECO:0007669"/>
    <property type="project" value="InterPro"/>
</dbReference>
<dbReference type="FunFam" id="3.20.20.20:FF:000001">
    <property type="entry name" value="4-hydroxy-3-methylbut-2-en-1-yl diphosphate synthase (flavodoxin)"/>
    <property type="match status" value="1"/>
</dbReference>
<dbReference type="FunFam" id="3.30.413.10:FF:000002">
    <property type="entry name" value="4-hydroxy-3-methylbut-2-en-1-yl diphosphate synthase (flavodoxin)"/>
    <property type="match status" value="1"/>
</dbReference>
<dbReference type="Gene3D" id="3.20.20.20">
    <property type="entry name" value="Dihydropteroate synthase-like"/>
    <property type="match status" value="1"/>
</dbReference>
<dbReference type="Gene3D" id="3.30.413.10">
    <property type="entry name" value="Sulfite Reductase Hemoprotein, domain 1"/>
    <property type="match status" value="1"/>
</dbReference>
<dbReference type="HAMAP" id="MF_00159">
    <property type="entry name" value="IspG"/>
    <property type="match status" value="1"/>
</dbReference>
<dbReference type="InterPro" id="IPR011005">
    <property type="entry name" value="Dihydropteroate_synth-like_sf"/>
</dbReference>
<dbReference type="InterPro" id="IPR036849">
    <property type="entry name" value="Enolase-like_C_sf"/>
</dbReference>
<dbReference type="InterPro" id="IPR016425">
    <property type="entry name" value="IspG_bac"/>
</dbReference>
<dbReference type="InterPro" id="IPR004588">
    <property type="entry name" value="IspG_bac-typ"/>
</dbReference>
<dbReference type="InterPro" id="IPR045854">
    <property type="entry name" value="NO2/SO3_Rdtase_4Fe4S_sf"/>
</dbReference>
<dbReference type="NCBIfam" id="TIGR00612">
    <property type="entry name" value="ispG_gcpE"/>
    <property type="match status" value="1"/>
</dbReference>
<dbReference type="NCBIfam" id="NF001540">
    <property type="entry name" value="PRK00366.1"/>
    <property type="match status" value="1"/>
</dbReference>
<dbReference type="PANTHER" id="PTHR30454">
    <property type="entry name" value="4-HYDROXY-3-METHYLBUT-2-EN-1-YL DIPHOSPHATE SYNTHASE"/>
    <property type="match status" value="1"/>
</dbReference>
<dbReference type="PANTHER" id="PTHR30454:SF0">
    <property type="entry name" value="4-HYDROXY-3-METHYLBUT-2-EN-1-YL DIPHOSPHATE SYNTHASE (FERREDOXIN), CHLOROPLASTIC"/>
    <property type="match status" value="1"/>
</dbReference>
<dbReference type="Pfam" id="PF04551">
    <property type="entry name" value="GcpE"/>
    <property type="match status" value="1"/>
</dbReference>
<dbReference type="PIRSF" id="PIRSF004640">
    <property type="entry name" value="IspG"/>
    <property type="match status" value="1"/>
</dbReference>
<dbReference type="SUPFAM" id="SSF51604">
    <property type="entry name" value="Enolase C-terminal domain-like"/>
    <property type="match status" value="1"/>
</dbReference>
<dbReference type="SUPFAM" id="SSF56014">
    <property type="entry name" value="Nitrite and sulphite reductase 4Fe-4S domain-like"/>
    <property type="match status" value="1"/>
</dbReference>
<protein>
    <recommendedName>
        <fullName evidence="1">4-hydroxy-3-methylbut-2-en-1-yl diphosphate synthase (flavodoxin)</fullName>
        <ecNumber evidence="1">1.17.7.3</ecNumber>
    </recommendedName>
    <alternativeName>
        <fullName evidence="1">1-hydroxy-2-methyl-2-(E)-butenyl 4-diphosphate synthase</fullName>
    </alternativeName>
</protein>
<sequence length="371" mass="40481">MYNESPIIRRKSSRIYVGNVPIGDGAPIAVQSMTNTRTTDVEATVAQIKALEKVGADIVRVSVPTMDAAEAFKFIKQQTNIPLIADIHFDYRIALKVAEYGVDCLRINPGNIGNEERIRSVVECARDKNIPIRIGVNGGSLEKDLMDKYKEPTPEALLESAMRHVDILDRLNFDQFKVSVKASDVFLAVESYRLLAKQIIQPLHLGITEAGGARAGSVKSAVGLGMLLADGIGDTLRISLAADPVEEIKVGFDILKSLRIRSRGINFIACPSCSRQEFDVISTVNELEQRLEDIVTPMDVSIIGCVVNGPGEALVSDIGLTGGNRMSGYYDDGVRQKERFDNNNIVDSLEAKIRAKAAIVASRIPAQDLNK</sequence>
<name>ISPG_SHEHH</name>
<organism>
    <name type="scientific">Shewanella halifaxensis (strain HAW-EB4)</name>
    <dbReference type="NCBI Taxonomy" id="458817"/>
    <lineage>
        <taxon>Bacteria</taxon>
        <taxon>Pseudomonadati</taxon>
        <taxon>Pseudomonadota</taxon>
        <taxon>Gammaproteobacteria</taxon>
        <taxon>Alteromonadales</taxon>
        <taxon>Shewanellaceae</taxon>
        <taxon>Shewanella</taxon>
    </lineage>
</organism>
<feature type="chain" id="PRO_1000076900" description="4-hydroxy-3-methylbut-2-en-1-yl diphosphate synthase (flavodoxin)">
    <location>
        <begin position="1"/>
        <end position="371"/>
    </location>
</feature>
<feature type="binding site" evidence="1">
    <location>
        <position position="270"/>
    </location>
    <ligand>
        <name>[4Fe-4S] cluster</name>
        <dbReference type="ChEBI" id="CHEBI:49883"/>
    </ligand>
</feature>
<feature type="binding site" evidence="1">
    <location>
        <position position="273"/>
    </location>
    <ligand>
        <name>[4Fe-4S] cluster</name>
        <dbReference type="ChEBI" id="CHEBI:49883"/>
    </ligand>
</feature>
<feature type="binding site" evidence="1">
    <location>
        <position position="305"/>
    </location>
    <ligand>
        <name>[4Fe-4S] cluster</name>
        <dbReference type="ChEBI" id="CHEBI:49883"/>
    </ligand>
</feature>
<feature type="binding site" evidence="1">
    <location>
        <position position="312"/>
    </location>
    <ligand>
        <name>[4Fe-4S] cluster</name>
        <dbReference type="ChEBI" id="CHEBI:49883"/>
    </ligand>
</feature>
<comment type="function">
    <text evidence="1">Converts 2C-methyl-D-erythritol 2,4-cyclodiphosphate (ME-2,4cPP) into 1-hydroxy-2-methyl-2-(E)-butenyl 4-diphosphate.</text>
</comment>
<comment type="catalytic activity">
    <reaction evidence="1">
        <text>(2E)-4-hydroxy-3-methylbut-2-enyl diphosphate + oxidized [flavodoxin] + H2O + 2 H(+) = 2-C-methyl-D-erythritol 2,4-cyclic diphosphate + reduced [flavodoxin]</text>
        <dbReference type="Rhea" id="RHEA:43604"/>
        <dbReference type="Rhea" id="RHEA-COMP:10622"/>
        <dbReference type="Rhea" id="RHEA-COMP:10623"/>
        <dbReference type="ChEBI" id="CHEBI:15377"/>
        <dbReference type="ChEBI" id="CHEBI:15378"/>
        <dbReference type="ChEBI" id="CHEBI:57618"/>
        <dbReference type="ChEBI" id="CHEBI:58210"/>
        <dbReference type="ChEBI" id="CHEBI:58483"/>
        <dbReference type="ChEBI" id="CHEBI:128753"/>
        <dbReference type="EC" id="1.17.7.3"/>
    </reaction>
</comment>
<comment type="cofactor">
    <cofactor evidence="1">
        <name>[4Fe-4S] cluster</name>
        <dbReference type="ChEBI" id="CHEBI:49883"/>
    </cofactor>
    <text evidence="1">Binds 1 [4Fe-4S] cluster.</text>
</comment>
<comment type="pathway">
    <text evidence="1">Isoprenoid biosynthesis; isopentenyl diphosphate biosynthesis via DXP pathway; isopentenyl diphosphate from 1-deoxy-D-xylulose 5-phosphate: step 5/6.</text>
</comment>
<comment type="similarity">
    <text evidence="1">Belongs to the IspG family.</text>
</comment>
<gene>
    <name evidence="1" type="primary">ispG</name>
    <name type="ordered locus">Shal_1367</name>
</gene>
<keyword id="KW-0004">4Fe-4S</keyword>
<keyword id="KW-0408">Iron</keyword>
<keyword id="KW-0411">Iron-sulfur</keyword>
<keyword id="KW-0414">Isoprene biosynthesis</keyword>
<keyword id="KW-0479">Metal-binding</keyword>
<keyword id="KW-0560">Oxidoreductase</keyword>
<reference key="1">
    <citation type="submission" date="2008-01" db="EMBL/GenBank/DDBJ databases">
        <title>Complete sequence of Shewanella halifaxensis HAW-EB4.</title>
        <authorList>
            <consortium name="US DOE Joint Genome Institute"/>
            <person name="Copeland A."/>
            <person name="Lucas S."/>
            <person name="Lapidus A."/>
            <person name="Glavina del Rio T."/>
            <person name="Dalin E."/>
            <person name="Tice H."/>
            <person name="Bruce D."/>
            <person name="Goodwin L."/>
            <person name="Pitluck S."/>
            <person name="Sims D."/>
            <person name="Brettin T."/>
            <person name="Detter J.C."/>
            <person name="Han C."/>
            <person name="Kuske C.R."/>
            <person name="Schmutz J."/>
            <person name="Larimer F."/>
            <person name="Land M."/>
            <person name="Hauser L."/>
            <person name="Kyrpides N."/>
            <person name="Kim E."/>
            <person name="Zhao J.-S."/>
            <person name="Richardson P."/>
        </authorList>
    </citation>
    <scope>NUCLEOTIDE SEQUENCE [LARGE SCALE GENOMIC DNA]</scope>
    <source>
        <strain>HAW-EB4</strain>
    </source>
</reference>
<proteinExistence type="inferred from homology"/>